<name>DNLJ_METC4</name>
<organism>
    <name type="scientific">Methylorubrum extorquens (strain CM4 / NCIMB 13688)</name>
    <name type="common">Methylobacterium extorquens</name>
    <dbReference type="NCBI Taxonomy" id="440085"/>
    <lineage>
        <taxon>Bacteria</taxon>
        <taxon>Pseudomonadati</taxon>
        <taxon>Pseudomonadota</taxon>
        <taxon>Alphaproteobacteria</taxon>
        <taxon>Hyphomicrobiales</taxon>
        <taxon>Methylobacteriaceae</taxon>
        <taxon>Methylorubrum</taxon>
    </lineage>
</organism>
<protein>
    <recommendedName>
        <fullName evidence="1">DNA ligase</fullName>
        <ecNumber evidence="1">6.5.1.2</ecNumber>
    </recommendedName>
    <alternativeName>
        <fullName evidence="1">Polydeoxyribonucleotide synthase [NAD(+)]</fullName>
    </alternativeName>
</protein>
<accession>B7KU78</accession>
<dbReference type="EC" id="6.5.1.2" evidence="1"/>
<dbReference type="EMBL" id="CP001298">
    <property type="protein sequence ID" value="ACK85869.1"/>
    <property type="molecule type" value="Genomic_DNA"/>
</dbReference>
<dbReference type="RefSeq" id="WP_015952775.1">
    <property type="nucleotide sequence ID" value="NC_011757.1"/>
</dbReference>
<dbReference type="SMR" id="B7KU78"/>
<dbReference type="KEGG" id="mch:Mchl_5105"/>
<dbReference type="HOGENOM" id="CLU_007764_2_1_5"/>
<dbReference type="Proteomes" id="UP000002385">
    <property type="component" value="Chromosome"/>
</dbReference>
<dbReference type="GO" id="GO:0005829">
    <property type="term" value="C:cytosol"/>
    <property type="evidence" value="ECO:0007669"/>
    <property type="project" value="TreeGrafter"/>
</dbReference>
<dbReference type="GO" id="GO:0003911">
    <property type="term" value="F:DNA ligase (NAD+) activity"/>
    <property type="evidence" value="ECO:0007669"/>
    <property type="project" value="UniProtKB-UniRule"/>
</dbReference>
<dbReference type="GO" id="GO:0046872">
    <property type="term" value="F:metal ion binding"/>
    <property type="evidence" value="ECO:0007669"/>
    <property type="project" value="UniProtKB-KW"/>
</dbReference>
<dbReference type="GO" id="GO:0006281">
    <property type="term" value="P:DNA repair"/>
    <property type="evidence" value="ECO:0007669"/>
    <property type="project" value="UniProtKB-KW"/>
</dbReference>
<dbReference type="GO" id="GO:0006260">
    <property type="term" value="P:DNA replication"/>
    <property type="evidence" value="ECO:0007669"/>
    <property type="project" value="UniProtKB-KW"/>
</dbReference>
<dbReference type="CDD" id="cd17748">
    <property type="entry name" value="BRCT_DNA_ligase_like"/>
    <property type="match status" value="1"/>
</dbReference>
<dbReference type="CDD" id="cd00114">
    <property type="entry name" value="LIGANc"/>
    <property type="match status" value="1"/>
</dbReference>
<dbReference type="FunFam" id="3.30.470.30:FF:000001">
    <property type="entry name" value="DNA ligase"/>
    <property type="match status" value="1"/>
</dbReference>
<dbReference type="Gene3D" id="6.20.10.30">
    <property type="match status" value="1"/>
</dbReference>
<dbReference type="Gene3D" id="1.10.150.20">
    <property type="entry name" value="5' to 3' exonuclease, C-terminal subdomain"/>
    <property type="match status" value="2"/>
</dbReference>
<dbReference type="Gene3D" id="3.40.50.10190">
    <property type="entry name" value="BRCT domain"/>
    <property type="match status" value="1"/>
</dbReference>
<dbReference type="Gene3D" id="3.30.470.30">
    <property type="entry name" value="DNA ligase/mRNA capping enzyme"/>
    <property type="match status" value="1"/>
</dbReference>
<dbReference type="Gene3D" id="1.10.287.610">
    <property type="entry name" value="Helix hairpin bin"/>
    <property type="match status" value="1"/>
</dbReference>
<dbReference type="Gene3D" id="2.40.50.140">
    <property type="entry name" value="Nucleic acid-binding proteins"/>
    <property type="match status" value="1"/>
</dbReference>
<dbReference type="HAMAP" id="MF_01588">
    <property type="entry name" value="DNA_ligase_A"/>
    <property type="match status" value="1"/>
</dbReference>
<dbReference type="InterPro" id="IPR001357">
    <property type="entry name" value="BRCT_dom"/>
</dbReference>
<dbReference type="InterPro" id="IPR036420">
    <property type="entry name" value="BRCT_dom_sf"/>
</dbReference>
<dbReference type="InterPro" id="IPR041663">
    <property type="entry name" value="DisA/LigA_HHH"/>
</dbReference>
<dbReference type="InterPro" id="IPR001679">
    <property type="entry name" value="DNA_ligase"/>
</dbReference>
<dbReference type="InterPro" id="IPR018239">
    <property type="entry name" value="DNA_ligase_AS"/>
</dbReference>
<dbReference type="InterPro" id="IPR033136">
    <property type="entry name" value="DNA_ligase_CS"/>
</dbReference>
<dbReference type="InterPro" id="IPR013839">
    <property type="entry name" value="DNAligase_adenylation"/>
</dbReference>
<dbReference type="InterPro" id="IPR013840">
    <property type="entry name" value="DNAligase_N"/>
</dbReference>
<dbReference type="InterPro" id="IPR012340">
    <property type="entry name" value="NA-bd_OB-fold"/>
</dbReference>
<dbReference type="InterPro" id="IPR004150">
    <property type="entry name" value="NAD_DNA_ligase_OB"/>
</dbReference>
<dbReference type="InterPro" id="IPR010994">
    <property type="entry name" value="RuvA_2-like"/>
</dbReference>
<dbReference type="InterPro" id="IPR004149">
    <property type="entry name" value="Znf_DNAligase_C4"/>
</dbReference>
<dbReference type="NCBIfam" id="TIGR00575">
    <property type="entry name" value="dnlj"/>
    <property type="match status" value="1"/>
</dbReference>
<dbReference type="NCBIfam" id="NF005932">
    <property type="entry name" value="PRK07956.1"/>
    <property type="match status" value="1"/>
</dbReference>
<dbReference type="PANTHER" id="PTHR23389">
    <property type="entry name" value="CHROMOSOME TRANSMISSION FIDELITY FACTOR 18"/>
    <property type="match status" value="1"/>
</dbReference>
<dbReference type="PANTHER" id="PTHR23389:SF9">
    <property type="entry name" value="DNA LIGASE"/>
    <property type="match status" value="1"/>
</dbReference>
<dbReference type="Pfam" id="PF00533">
    <property type="entry name" value="BRCT"/>
    <property type="match status" value="1"/>
</dbReference>
<dbReference type="Pfam" id="PF01653">
    <property type="entry name" value="DNA_ligase_aden"/>
    <property type="match status" value="1"/>
</dbReference>
<dbReference type="Pfam" id="PF03120">
    <property type="entry name" value="DNA_ligase_OB"/>
    <property type="match status" value="1"/>
</dbReference>
<dbReference type="Pfam" id="PF03119">
    <property type="entry name" value="DNA_ligase_ZBD"/>
    <property type="match status" value="1"/>
</dbReference>
<dbReference type="Pfam" id="PF12826">
    <property type="entry name" value="HHH_2"/>
    <property type="match status" value="1"/>
</dbReference>
<dbReference type="PIRSF" id="PIRSF001604">
    <property type="entry name" value="LigA"/>
    <property type="match status" value="1"/>
</dbReference>
<dbReference type="SMART" id="SM00292">
    <property type="entry name" value="BRCT"/>
    <property type="match status" value="1"/>
</dbReference>
<dbReference type="SMART" id="SM00532">
    <property type="entry name" value="LIGANc"/>
    <property type="match status" value="1"/>
</dbReference>
<dbReference type="SUPFAM" id="SSF52113">
    <property type="entry name" value="BRCT domain"/>
    <property type="match status" value="1"/>
</dbReference>
<dbReference type="SUPFAM" id="SSF56091">
    <property type="entry name" value="DNA ligase/mRNA capping enzyme, catalytic domain"/>
    <property type="match status" value="1"/>
</dbReference>
<dbReference type="SUPFAM" id="SSF50249">
    <property type="entry name" value="Nucleic acid-binding proteins"/>
    <property type="match status" value="1"/>
</dbReference>
<dbReference type="SUPFAM" id="SSF47781">
    <property type="entry name" value="RuvA domain 2-like"/>
    <property type="match status" value="1"/>
</dbReference>
<dbReference type="PROSITE" id="PS50172">
    <property type="entry name" value="BRCT"/>
    <property type="match status" value="1"/>
</dbReference>
<dbReference type="PROSITE" id="PS01055">
    <property type="entry name" value="DNA_LIGASE_N1"/>
    <property type="match status" value="1"/>
</dbReference>
<dbReference type="PROSITE" id="PS01056">
    <property type="entry name" value="DNA_LIGASE_N2"/>
    <property type="match status" value="1"/>
</dbReference>
<sequence length="814" mass="87641">MPSTPLSATVEALSEDAAQARHAELSRAIERANQLYYNEDAPELTDAEYDALRQELEAIEARFPALTGTTEASAGVGAKPSEKFAKVRHAVPMLSLGNAFADEDVDEFVARVRRFLNLPAEEAVAFTAEPKIDGLSLSLRYEAGRLVTAATRGDGEVGENVTANALTVDDIPETLSGEGIPEVLEVRGEIYLSHEDFAAINARQEAAGKPLFANPRNAAAGSLRQLDPAITASRPLRFFAYAWGEVSEPFTDTQSAVLERFRGWGLPVNPRTKLCRSAEEMIAHYRAIEAERAGLGYDIDGVVYKVDDLGFQRRLGFVSRAPRWALAHKFAAQEAITELLAIDINVGRTGSLNPLARLKPVTVGGVVVSNATLHNEGYVQGVGADGEPIREGRDIRVGDTVIVVRAGDVIPKVRDVVIEKRPADAVPYVFPDTCPACGSRAVRELNPRTKKLDAIRRCTGGLICPAQGVERLKHFVSRNGLDLEGFGQTYIEVLFEAGLVKQPADLFRLEFEPLKAAIVARREALSAQRRTEGEPAPKKPTKKKGEEEDKAIKNLLASLDARRTIPLNRFLFALGIPQIGESTAKALAKRFPDMPALMAALAAATREQAGRDWLELSALPRIGPGTRDRLFETLDPLPGEAMQDLSLGARLRGRLTPSQREAVLAHYGSEAEADAALERAASQRPGDAYRLFADDGEIGPVATDSLIQFFSEPHNDAAVRALLEEVGTEPLAATTSAAAFAGKTVVFTGSLEKMTRSEAKATAERLGAKVSGSVSAKTDLVVAGPGAGSKLKDAEKHGVKVVSEDDWLAMLAEA</sequence>
<reference key="1">
    <citation type="submission" date="2008-12" db="EMBL/GenBank/DDBJ databases">
        <title>Complete sequence of chromosome of Methylobacterium chloromethanicum CM4.</title>
        <authorList>
            <consortium name="US DOE Joint Genome Institute"/>
            <person name="Lucas S."/>
            <person name="Copeland A."/>
            <person name="Lapidus A."/>
            <person name="Glavina del Rio T."/>
            <person name="Dalin E."/>
            <person name="Tice H."/>
            <person name="Bruce D."/>
            <person name="Goodwin L."/>
            <person name="Pitluck S."/>
            <person name="Chertkov O."/>
            <person name="Brettin T."/>
            <person name="Detter J.C."/>
            <person name="Han C."/>
            <person name="Larimer F."/>
            <person name="Land M."/>
            <person name="Hauser L."/>
            <person name="Kyrpides N."/>
            <person name="Mikhailova N."/>
            <person name="Marx C."/>
            <person name="Richardson P."/>
        </authorList>
    </citation>
    <scope>NUCLEOTIDE SEQUENCE [LARGE SCALE GENOMIC DNA]</scope>
    <source>
        <strain>CM4 / NCIMB 13688</strain>
    </source>
</reference>
<keyword id="KW-0227">DNA damage</keyword>
<keyword id="KW-0234">DNA repair</keyword>
<keyword id="KW-0235">DNA replication</keyword>
<keyword id="KW-0436">Ligase</keyword>
<keyword id="KW-0460">Magnesium</keyword>
<keyword id="KW-0464">Manganese</keyword>
<keyword id="KW-0479">Metal-binding</keyword>
<keyword id="KW-0520">NAD</keyword>
<keyword id="KW-0862">Zinc</keyword>
<evidence type="ECO:0000255" key="1">
    <source>
        <dbReference type="HAMAP-Rule" id="MF_01588"/>
    </source>
</evidence>
<evidence type="ECO:0000256" key="2">
    <source>
        <dbReference type="SAM" id="MobiDB-lite"/>
    </source>
</evidence>
<comment type="function">
    <text evidence="1">DNA ligase that catalyzes the formation of phosphodiester linkages between 5'-phosphoryl and 3'-hydroxyl groups in double-stranded DNA using NAD as a coenzyme and as the energy source for the reaction. It is essential for DNA replication and repair of damaged DNA.</text>
</comment>
<comment type="catalytic activity">
    <reaction evidence="1">
        <text>NAD(+) + (deoxyribonucleotide)n-3'-hydroxyl + 5'-phospho-(deoxyribonucleotide)m = (deoxyribonucleotide)n+m + AMP + beta-nicotinamide D-nucleotide.</text>
        <dbReference type="EC" id="6.5.1.2"/>
    </reaction>
</comment>
<comment type="cofactor">
    <cofactor evidence="1">
        <name>Mg(2+)</name>
        <dbReference type="ChEBI" id="CHEBI:18420"/>
    </cofactor>
    <cofactor evidence="1">
        <name>Mn(2+)</name>
        <dbReference type="ChEBI" id="CHEBI:29035"/>
    </cofactor>
</comment>
<comment type="similarity">
    <text evidence="1">Belongs to the NAD-dependent DNA ligase family. LigA subfamily.</text>
</comment>
<proteinExistence type="inferred from homology"/>
<gene>
    <name evidence="1" type="primary">ligA</name>
    <name type="ordered locus">Mchl_5105</name>
</gene>
<feature type="chain" id="PRO_0000380414" description="DNA ligase">
    <location>
        <begin position="1"/>
        <end position="814"/>
    </location>
</feature>
<feature type="domain" description="BRCT" evidence="1">
    <location>
        <begin position="735"/>
        <end position="814"/>
    </location>
</feature>
<feature type="region of interest" description="Disordered" evidence="2">
    <location>
        <begin position="526"/>
        <end position="549"/>
    </location>
</feature>
<feature type="active site" description="N6-AMP-lysine intermediate" evidence="1">
    <location>
        <position position="131"/>
    </location>
</feature>
<feature type="binding site" evidence="1">
    <location>
        <begin position="46"/>
        <end position="50"/>
    </location>
    <ligand>
        <name>NAD(+)</name>
        <dbReference type="ChEBI" id="CHEBI:57540"/>
    </ligand>
</feature>
<feature type="binding site" evidence="1">
    <location>
        <begin position="95"/>
        <end position="96"/>
    </location>
    <ligand>
        <name>NAD(+)</name>
        <dbReference type="ChEBI" id="CHEBI:57540"/>
    </ligand>
</feature>
<feature type="binding site" evidence="1">
    <location>
        <position position="129"/>
    </location>
    <ligand>
        <name>NAD(+)</name>
        <dbReference type="ChEBI" id="CHEBI:57540"/>
    </ligand>
</feature>
<feature type="binding site" evidence="1">
    <location>
        <position position="152"/>
    </location>
    <ligand>
        <name>NAD(+)</name>
        <dbReference type="ChEBI" id="CHEBI:57540"/>
    </ligand>
</feature>
<feature type="binding site" evidence="1">
    <location>
        <position position="189"/>
    </location>
    <ligand>
        <name>NAD(+)</name>
        <dbReference type="ChEBI" id="CHEBI:57540"/>
    </ligand>
</feature>
<feature type="binding site" evidence="1">
    <location>
        <position position="305"/>
    </location>
    <ligand>
        <name>NAD(+)</name>
        <dbReference type="ChEBI" id="CHEBI:57540"/>
    </ligand>
</feature>
<feature type="binding site" evidence="1">
    <location>
        <position position="329"/>
    </location>
    <ligand>
        <name>NAD(+)</name>
        <dbReference type="ChEBI" id="CHEBI:57540"/>
    </ligand>
</feature>
<feature type="binding site" evidence="1">
    <location>
        <position position="434"/>
    </location>
    <ligand>
        <name>Zn(2+)</name>
        <dbReference type="ChEBI" id="CHEBI:29105"/>
    </ligand>
</feature>
<feature type="binding site" evidence="1">
    <location>
        <position position="437"/>
    </location>
    <ligand>
        <name>Zn(2+)</name>
        <dbReference type="ChEBI" id="CHEBI:29105"/>
    </ligand>
</feature>
<feature type="binding site" evidence="1">
    <location>
        <position position="458"/>
    </location>
    <ligand>
        <name>Zn(2+)</name>
        <dbReference type="ChEBI" id="CHEBI:29105"/>
    </ligand>
</feature>
<feature type="binding site" evidence="1">
    <location>
        <position position="464"/>
    </location>
    <ligand>
        <name>Zn(2+)</name>
        <dbReference type="ChEBI" id="CHEBI:29105"/>
    </ligand>
</feature>